<dbReference type="EMBL" id="CP000539">
    <property type="protein sequence ID" value="ABM40532.1"/>
    <property type="molecule type" value="Genomic_DNA"/>
</dbReference>
<dbReference type="SMR" id="A1W2Q7"/>
<dbReference type="STRING" id="232721.Ajs_0278"/>
<dbReference type="KEGG" id="ajs:Ajs_0278"/>
<dbReference type="eggNOG" id="COG0087">
    <property type="taxonomic scope" value="Bacteria"/>
</dbReference>
<dbReference type="HOGENOM" id="CLU_044142_4_1_4"/>
<dbReference type="Proteomes" id="UP000000645">
    <property type="component" value="Chromosome"/>
</dbReference>
<dbReference type="GO" id="GO:0022625">
    <property type="term" value="C:cytosolic large ribosomal subunit"/>
    <property type="evidence" value="ECO:0007669"/>
    <property type="project" value="TreeGrafter"/>
</dbReference>
<dbReference type="GO" id="GO:0019843">
    <property type="term" value="F:rRNA binding"/>
    <property type="evidence" value="ECO:0007669"/>
    <property type="project" value="UniProtKB-UniRule"/>
</dbReference>
<dbReference type="GO" id="GO:0003735">
    <property type="term" value="F:structural constituent of ribosome"/>
    <property type="evidence" value="ECO:0007669"/>
    <property type="project" value="InterPro"/>
</dbReference>
<dbReference type="GO" id="GO:0006412">
    <property type="term" value="P:translation"/>
    <property type="evidence" value="ECO:0007669"/>
    <property type="project" value="UniProtKB-UniRule"/>
</dbReference>
<dbReference type="FunFam" id="2.40.30.10:FF:000004">
    <property type="entry name" value="50S ribosomal protein L3"/>
    <property type="match status" value="1"/>
</dbReference>
<dbReference type="FunFam" id="3.30.160.810:FF:000001">
    <property type="entry name" value="50S ribosomal protein L3"/>
    <property type="match status" value="1"/>
</dbReference>
<dbReference type="Gene3D" id="3.30.160.810">
    <property type="match status" value="1"/>
</dbReference>
<dbReference type="Gene3D" id="2.40.30.10">
    <property type="entry name" value="Translation factors"/>
    <property type="match status" value="1"/>
</dbReference>
<dbReference type="HAMAP" id="MF_01325_B">
    <property type="entry name" value="Ribosomal_uL3_B"/>
    <property type="match status" value="1"/>
</dbReference>
<dbReference type="InterPro" id="IPR000597">
    <property type="entry name" value="Ribosomal_uL3"/>
</dbReference>
<dbReference type="InterPro" id="IPR019927">
    <property type="entry name" value="Ribosomal_uL3_bac/org-type"/>
</dbReference>
<dbReference type="InterPro" id="IPR019926">
    <property type="entry name" value="Ribosomal_uL3_CS"/>
</dbReference>
<dbReference type="InterPro" id="IPR009000">
    <property type="entry name" value="Transl_B-barrel_sf"/>
</dbReference>
<dbReference type="NCBIfam" id="TIGR03625">
    <property type="entry name" value="L3_bact"/>
    <property type="match status" value="1"/>
</dbReference>
<dbReference type="PANTHER" id="PTHR11229">
    <property type="entry name" value="50S RIBOSOMAL PROTEIN L3"/>
    <property type="match status" value="1"/>
</dbReference>
<dbReference type="PANTHER" id="PTHR11229:SF16">
    <property type="entry name" value="LARGE RIBOSOMAL SUBUNIT PROTEIN UL3C"/>
    <property type="match status" value="1"/>
</dbReference>
<dbReference type="Pfam" id="PF00297">
    <property type="entry name" value="Ribosomal_L3"/>
    <property type="match status" value="1"/>
</dbReference>
<dbReference type="SUPFAM" id="SSF50447">
    <property type="entry name" value="Translation proteins"/>
    <property type="match status" value="1"/>
</dbReference>
<dbReference type="PROSITE" id="PS00474">
    <property type="entry name" value="RIBOSOMAL_L3"/>
    <property type="match status" value="1"/>
</dbReference>
<name>RL3_ACISJ</name>
<keyword id="KW-0488">Methylation</keyword>
<keyword id="KW-0687">Ribonucleoprotein</keyword>
<keyword id="KW-0689">Ribosomal protein</keyword>
<keyword id="KW-0694">RNA-binding</keyword>
<keyword id="KW-0699">rRNA-binding</keyword>
<accession>A1W2Q7</accession>
<gene>
    <name evidence="1" type="primary">rplC</name>
    <name type="ordered locus">Ajs_0278</name>
</gene>
<protein>
    <recommendedName>
        <fullName evidence="1">Large ribosomal subunit protein uL3</fullName>
    </recommendedName>
    <alternativeName>
        <fullName evidence="2">50S ribosomal protein L3</fullName>
    </alternativeName>
</protein>
<proteinExistence type="inferred from homology"/>
<evidence type="ECO:0000255" key="1">
    <source>
        <dbReference type="HAMAP-Rule" id="MF_01325"/>
    </source>
</evidence>
<evidence type="ECO:0000305" key="2"/>
<organism>
    <name type="scientific">Acidovorax sp. (strain JS42)</name>
    <dbReference type="NCBI Taxonomy" id="232721"/>
    <lineage>
        <taxon>Bacteria</taxon>
        <taxon>Pseudomonadati</taxon>
        <taxon>Pseudomonadota</taxon>
        <taxon>Betaproteobacteria</taxon>
        <taxon>Burkholderiales</taxon>
        <taxon>Comamonadaceae</taxon>
        <taxon>Acidovorax</taxon>
    </lineage>
</organism>
<reference key="1">
    <citation type="submission" date="2006-12" db="EMBL/GenBank/DDBJ databases">
        <title>Complete sequence of chromosome 1 of Acidovorax sp. JS42.</title>
        <authorList>
            <person name="Copeland A."/>
            <person name="Lucas S."/>
            <person name="Lapidus A."/>
            <person name="Barry K."/>
            <person name="Detter J.C."/>
            <person name="Glavina del Rio T."/>
            <person name="Dalin E."/>
            <person name="Tice H."/>
            <person name="Pitluck S."/>
            <person name="Chertkov O."/>
            <person name="Brettin T."/>
            <person name="Bruce D."/>
            <person name="Han C."/>
            <person name="Tapia R."/>
            <person name="Gilna P."/>
            <person name="Schmutz J."/>
            <person name="Larimer F."/>
            <person name="Land M."/>
            <person name="Hauser L."/>
            <person name="Kyrpides N."/>
            <person name="Kim E."/>
            <person name="Stahl D."/>
            <person name="Richardson P."/>
        </authorList>
    </citation>
    <scope>NUCLEOTIDE SEQUENCE [LARGE SCALE GENOMIC DNA]</scope>
    <source>
        <strain>JS42</strain>
    </source>
</reference>
<comment type="function">
    <text evidence="1">One of the primary rRNA binding proteins, it binds directly near the 3'-end of the 23S rRNA, where it nucleates assembly of the 50S subunit.</text>
</comment>
<comment type="subunit">
    <text evidence="1">Part of the 50S ribosomal subunit. Forms a cluster with proteins L14 and L19.</text>
</comment>
<comment type="PTM">
    <text evidence="1">Methylated by PrmB.</text>
</comment>
<comment type="similarity">
    <text evidence="1">Belongs to the universal ribosomal protein uL3 family.</text>
</comment>
<sequence>MSLSNSLGLLGRKVGMMRLFTDDGDAVPVTVVDVSNNRVTQVKTQENDGYVSLQVTFGSRKASRVTKPEAGHLAKAGVEAGEIIREFRVTPEVAGKYAAGAAVPVADVFAVGQKVDVQGTSIGKGFAGTIKRHNFGSQRASHGNSRSHNVPGSIGMAQDPGRVFPGKKMTGHLGDVTVTTQNLDVVRIDEARQLLLIKGAVPGSKGGFVTVRPAVKAQASKGAN</sequence>
<feature type="chain" id="PRO_1000052001" description="Large ribosomal subunit protein uL3">
    <location>
        <begin position="1"/>
        <end position="224"/>
    </location>
</feature>
<feature type="modified residue" description="N5-methylglutamine" evidence="1">
    <location>
        <position position="158"/>
    </location>
</feature>